<protein>
    <recommendedName>
        <fullName evidence="1">Malonate-semialdehyde dehydrogenase 2</fullName>
        <shortName evidence="1">MSA dehydrogenase 2</shortName>
        <ecNumber evidence="1">1.2.1.27</ecNumber>
    </recommendedName>
    <alternativeName>
        <fullName evidence="1">Methylmalonate-semialdehyde dehydrogenase 2</fullName>
        <shortName evidence="1">MMSA dehydrogenase 2</shortName>
        <shortName evidence="1">MSDH 2</shortName>
    </alternativeName>
</protein>
<comment type="function">
    <text evidence="1">Catalyzes the oxidation of malonate semialdehyde (MSA) and methylmalonate semialdehyde (MMSA) into acetyl-CoA and propanoyl-CoA, respectively. Is involved in a myo-inositol catabolic pathway. Bicarbonate, and not CO2, is the end-product of the enzymatic reaction.</text>
</comment>
<comment type="catalytic activity">
    <reaction evidence="1">
        <text>3-oxopropanoate + NAD(+) + CoA + H2O = hydrogencarbonate + acetyl-CoA + NADH + H(+)</text>
        <dbReference type="Rhea" id="RHEA:76615"/>
        <dbReference type="ChEBI" id="CHEBI:15377"/>
        <dbReference type="ChEBI" id="CHEBI:15378"/>
        <dbReference type="ChEBI" id="CHEBI:17544"/>
        <dbReference type="ChEBI" id="CHEBI:33190"/>
        <dbReference type="ChEBI" id="CHEBI:57287"/>
        <dbReference type="ChEBI" id="CHEBI:57288"/>
        <dbReference type="ChEBI" id="CHEBI:57540"/>
        <dbReference type="ChEBI" id="CHEBI:57945"/>
        <dbReference type="EC" id="1.2.1.27"/>
    </reaction>
    <physiologicalReaction direction="left-to-right" evidence="1">
        <dbReference type="Rhea" id="RHEA:76616"/>
    </physiologicalReaction>
</comment>
<comment type="catalytic activity">
    <reaction evidence="1">
        <text>2-methyl-3-oxopropanoate + NAD(+) + CoA + H2O = propanoyl-CoA + hydrogencarbonate + NADH + H(+)</text>
        <dbReference type="Rhea" id="RHEA:20804"/>
        <dbReference type="ChEBI" id="CHEBI:15377"/>
        <dbReference type="ChEBI" id="CHEBI:15378"/>
        <dbReference type="ChEBI" id="CHEBI:17544"/>
        <dbReference type="ChEBI" id="CHEBI:57287"/>
        <dbReference type="ChEBI" id="CHEBI:57392"/>
        <dbReference type="ChEBI" id="CHEBI:57540"/>
        <dbReference type="ChEBI" id="CHEBI:57700"/>
        <dbReference type="ChEBI" id="CHEBI:57945"/>
        <dbReference type="EC" id="1.2.1.27"/>
    </reaction>
    <physiologicalReaction direction="left-to-right" evidence="1">
        <dbReference type="Rhea" id="RHEA:20805"/>
    </physiologicalReaction>
</comment>
<comment type="pathway">
    <text evidence="1">Polyol metabolism; myo-inositol degradation into acetyl-CoA; acetyl-CoA from myo-inositol: step 7/7.</text>
</comment>
<comment type="subunit">
    <text evidence="1">Homotetramer.</text>
</comment>
<comment type="similarity">
    <text evidence="1">Belongs to the aldehyde dehydrogenase family. IolA subfamily.</text>
</comment>
<comment type="sequence caution" evidence="2">
    <conflict type="erroneous initiation">
        <sequence resource="EMBL-CDS" id="ABY44349"/>
    </conflict>
</comment>
<accession>A9VMS6</accession>
<sequence>MKNVQTLKNYIGGQWIESTSKQVEDVPNPATGEIIARVPLSTKEDLDRAVATAKEAFKTWRKVAVPRRARILFRYQQLLIENWEGLAKLVTLENGKSYKEAYGEVQRGIECVEFAAGAPTLMMGEQLPDIATGVESGMYRYPIGVIAGITPFNFPMMVPCWMFPLAIACGNTFVLKPSERTPLLANRIAELFKEAGLPDGVLNIVHGAHDVVNGILDNEDVKAVSFVGSQPVAEYIYKTAAANGKRVQALAGAKNHSIVLKDADLSSTVKEITSAAFGSAGERCMAAAVVVVEEDVADELVNRLLQEANAITIGNGLEEGVFLGPVIREGHKERTLGYIQSGVEQGATLIRDGREDDIANSQGYFVGPTIFDNVTQEMKIWQDEIFAPVLSIVRVKDLMEAIHVANASPFANGACLYTNSAKAIREFREEIDAGMLGVNLGVPAPMAFFPFSGYKKSFYGDLHANGKDGVEFYTRKKMLTARY</sequence>
<evidence type="ECO:0000255" key="1">
    <source>
        <dbReference type="HAMAP-Rule" id="MF_01670"/>
    </source>
</evidence>
<evidence type="ECO:0000305" key="2"/>
<dbReference type="EC" id="1.2.1.27" evidence="1"/>
<dbReference type="EMBL" id="CP000903">
    <property type="protein sequence ID" value="ABY44349.1"/>
    <property type="status" value="ALT_INIT"/>
    <property type="molecule type" value="Genomic_DNA"/>
</dbReference>
<dbReference type="SMR" id="A9VMS6"/>
<dbReference type="KEGG" id="bwe:BcerKBAB4_3173"/>
<dbReference type="eggNOG" id="COG1012">
    <property type="taxonomic scope" value="Bacteria"/>
</dbReference>
<dbReference type="HOGENOM" id="CLU_005391_1_0_9"/>
<dbReference type="UniPathway" id="UPA00076">
    <property type="reaction ID" value="UER00148"/>
</dbReference>
<dbReference type="Proteomes" id="UP000002154">
    <property type="component" value="Chromosome"/>
</dbReference>
<dbReference type="GO" id="GO:0018478">
    <property type="term" value="F:malonate-semialdehyde dehydrogenase (acetylating) activity"/>
    <property type="evidence" value="ECO:0007669"/>
    <property type="project" value="UniProtKB-UniRule"/>
</dbReference>
<dbReference type="GO" id="GO:0004491">
    <property type="term" value="F:methylmalonate-semialdehyde dehydrogenase (acylating, NAD) activity"/>
    <property type="evidence" value="ECO:0007669"/>
    <property type="project" value="UniProtKB-UniRule"/>
</dbReference>
<dbReference type="GO" id="GO:0019310">
    <property type="term" value="P:inositol catabolic process"/>
    <property type="evidence" value="ECO:0007669"/>
    <property type="project" value="UniProtKB-UniRule"/>
</dbReference>
<dbReference type="GO" id="GO:0006210">
    <property type="term" value="P:thymine catabolic process"/>
    <property type="evidence" value="ECO:0007669"/>
    <property type="project" value="TreeGrafter"/>
</dbReference>
<dbReference type="GO" id="GO:0006574">
    <property type="term" value="P:valine catabolic process"/>
    <property type="evidence" value="ECO:0007669"/>
    <property type="project" value="TreeGrafter"/>
</dbReference>
<dbReference type="CDD" id="cd07085">
    <property type="entry name" value="ALDH_F6_MMSDH"/>
    <property type="match status" value="1"/>
</dbReference>
<dbReference type="FunFam" id="3.40.309.10:FF:000002">
    <property type="entry name" value="Methylmalonate-semialdehyde dehydrogenase (Acylating)"/>
    <property type="match status" value="1"/>
</dbReference>
<dbReference type="FunFam" id="3.40.605.10:FF:000003">
    <property type="entry name" value="Methylmalonate-semialdehyde dehydrogenase [acylating]"/>
    <property type="match status" value="1"/>
</dbReference>
<dbReference type="Gene3D" id="3.40.605.10">
    <property type="entry name" value="Aldehyde Dehydrogenase, Chain A, domain 1"/>
    <property type="match status" value="1"/>
</dbReference>
<dbReference type="Gene3D" id="3.40.309.10">
    <property type="entry name" value="Aldehyde Dehydrogenase, Chain A, domain 2"/>
    <property type="match status" value="1"/>
</dbReference>
<dbReference type="HAMAP" id="MF_01670">
    <property type="entry name" value="IolA"/>
    <property type="match status" value="1"/>
</dbReference>
<dbReference type="InterPro" id="IPR016161">
    <property type="entry name" value="Ald_DH/histidinol_DH"/>
</dbReference>
<dbReference type="InterPro" id="IPR016163">
    <property type="entry name" value="Ald_DH_C"/>
</dbReference>
<dbReference type="InterPro" id="IPR016160">
    <property type="entry name" value="Ald_DH_CS_CYS"/>
</dbReference>
<dbReference type="InterPro" id="IPR016162">
    <property type="entry name" value="Ald_DH_N"/>
</dbReference>
<dbReference type="InterPro" id="IPR015590">
    <property type="entry name" value="Aldehyde_DH_dom"/>
</dbReference>
<dbReference type="InterPro" id="IPR010061">
    <property type="entry name" value="MeMal-semiAld_DH"/>
</dbReference>
<dbReference type="InterPro" id="IPR023510">
    <property type="entry name" value="MSDH_GmP_bac"/>
</dbReference>
<dbReference type="NCBIfam" id="TIGR01722">
    <property type="entry name" value="MMSDH"/>
    <property type="match status" value="1"/>
</dbReference>
<dbReference type="PANTHER" id="PTHR43866">
    <property type="entry name" value="MALONATE-SEMIALDEHYDE DEHYDROGENASE"/>
    <property type="match status" value="1"/>
</dbReference>
<dbReference type="PANTHER" id="PTHR43866:SF4">
    <property type="entry name" value="MALONATE-SEMIALDEHYDE DEHYDROGENASE"/>
    <property type="match status" value="1"/>
</dbReference>
<dbReference type="Pfam" id="PF00171">
    <property type="entry name" value="Aldedh"/>
    <property type="match status" value="1"/>
</dbReference>
<dbReference type="SUPFAM" id="SSF53720">
    <property type="entry name" value="ALDH-like"/>
    <property type="match status" value="1"/>
</dbReference>
<dbReference type="PROSITE" id="PS00070">
    <property type="entry name" value="ALDEHYDE_DEHYDR_CYS"/>
    <property type="match status" value="1"/>
</dbReference>
<feature type="chain" id="PRO_0000352338" description="Malonate-semialdehyde dehydrogenase 2">
    <location>
        <begin position="1"/>
        <end position="483"/>
    </location>
</feature>
<feature type="active site" description="Nucleophile" evidence="1">
    <location>
        <position position="284"/>
    </location>
</feature>
<feature type="binding site" evidence="1">
    <location>
        <position position="152"/>
    </location>
    <ligand>
        <name>NAD(+)</name>
        <dbReference type="ChEBI" id="CHEBI:57540"/>
    </ligand>
</feature>
<feature type="binding site" evidence="1">
    <location>
        <position position="176"/>
    </location>
    <ligand>
        <name>NAD(+)</name>
        <dbReference type="ChEBI" id="CHEBI:57540"/>
    </ligand>
</feature>
<feature type="binding site" evidence="1">
    <location>
        <position position="179"/>
    </location>
    <ligand>
        <name>NAD(+)</name>
        <dbReference type="ChEBI" id="CHEBI:57540"/>
    </ligand>
</feature>
<feature type="binding site" evidence="1">
    <location>
        <position position="180"/>
    </location>
    <ligand>
        <name>NAD(+)</name>
        <dbReference type="ChEBI" id="CHEBI:57540"/>
    </ligand>
</feature>
<feature type="binding site" evidence="1">
    <location>
        <position position="229"/>
    </location>
    <ligand>
        <name>NAD(+)</name>
        <dbReference type="ChEBI" id="CHEBI:57540"/>
    </ligand>
</feature>
<feature type="binding site" evidence="1">
    <location>
        <position position="384"/>
    </location>
    <ligand>
        <name>NAD(+)</name>
        <dbReference type="ChEBI" id="CHEBI:57540"/>
    </ligand>
</feature>
<gene>
    <name evidence="1" type="primary">iolA2</name>
    <name type="ordered locus">BcerKBAB4_3173</name>
</gene>
<reference key="1">
    <citation type="journal article" date="2008" name="Chem. Biol. Interact.">
        <title>Extending the Bacillus cereus group genomics to putative food-borne pathogens of different toxicity.</title>
        <authorList>
            <person name="Lapidus A."/>
            <person name="Goltsman E."/>
            <person name="Auger S."/>
            <person name="Galleron N."/>
            <person name="Segurens B."/>
            <person name="Dossat C."/>
            <person name="Land M.L."/>
            <person name="Broussolle V."/>
            <person name="Brillard J."/>
            <person name="Guinebretiere M.-H."/>
            <person name="Sanchis V."/>
            <person name="Nguen-the C."/>
            <person name="Lereclus D."/>
            <person name="Richardson P."/>
            <person name="Wincker P."/>
            <person name="Weissenbach J."/>
            <person name="Ehrlich S.D."/>
            <person name="Sorokin A."/>
        </authorList>
    </citation>
    <scope>NUCLEOTIDE SEQUENCE [LARGE SCALE GENOMIC DNA]</scope>
    <source>
        <strain>KBAB4</strain>
    </source>
</reference>
<name>IOLA2_BACMK</name>
<proteinExistence type="inferred from homology"/>
<organism>
    <name type="scientific">Bacillus mycoides (strain KBAB4)</name>
    <name type="common">Bacillus weihenstephanensis</name>
    <dbReference type="NCBI Taxonomy" id="315730"/>
    <lineage>
        <taxon>Bacteria</taxon>
        <taxon>Bacillati</taxon>
        <taxon>Bacillota</taxon>
        <taxon>Bacilli</taxon>
        <taxon>Bacillales</taxon>
        <taxon>Bacillaceae</taxon>
        <taxon>Bacillus</taxon>
        <taxon>Bacillus cereus group</taxon>
    </lineage>
</organism>
<keyword id="KW-0520">NAD</keyword>
<keyword id="KW-0560">Oxidoreductase</keyword>